<gene>
    <name type="ordered locus">pXO2-04</name>
    <name type="ordered locus">BXB0002</name>
    <name type="ordered locus">GBAA_pXO2_0002</name>
</gene>
<sequence length="95" mass="11613">MEIHVRNVDPYHLKEIDKRCKEIGKKLGRRYYRWEYINMMFEQHFNQEYSRNKEDKFDEAVSNVSITLDRQSDKLQEYIDATHELVAAMIKLNEE</sequence>
<feature type="chain" id="PRO_0000216826" description="Uncharacterized protein pXO2-04/BXB0002/GBAA_pXO2_0002">
    <location>
        <begin position="1"/>
        <end position="95"/>
    </location>
</feature>
<accession>Q9RN28</accession>
<dbReference type="EMBL" id="AF188935">
    <property type="protein sequence ID" value="AAF13609.1"/>
    <property type="molecule type" value="Genomic_DNA"/>
</dbReference>
<dbReference type="EMBL" id="AE011191">
    <property type="protein sequence ID" value="AAM26163.1"/>
    <property type="molecule type" value="Genomic_DNA"/>
</dbReference>
<dbReference type="EMBL" id="AE017335">
    <property type="protein sequence ID" value="AAT28932.2"/>
    <property type="molecule type" value="Genomic_DNA"/>
</dbReference>
<dbReference type="RefSeq" id="NP_053159.1">
    <property type="nucleotide sequence ID" value="NC_002146.1"/>
</dbReference>
<dbReference type="RefSeq" id="WP_000402462.1">
    <property type="nucleotide sequence ID" value="NZ_VTZL01000009.1"/>
</dbReference>
<dbReference type="GeneID" id="45025318"/>
<dbReference type="KEGG" id="banh:HYU01_29015"/>
<dbReference type="KEGG" id="bar:GBAA_pXO2_0002"/>
<dbReference type="HOGENOM" id="CLU_159869_0_0_9"/>
<dbReference type="OMA" id="INPNHIA"/>
<dbReference type="Proteomes" id="UP000000594">
    <property type="component" value="Plasmid pXO2"/>
</dbReference>
<proteinExistence type="predicted"/>
<keyword id="KW-0614">Plasmid</keyword>
<keyword id="KW-1185">Reference proteome</keyword>
<name>Y6502_BACAN</name>
<reference key="1">
    <citation type="journal article" date="1999" name="J. Appl. Microbiol.">
        <title>Sequence, assembly and analysis of pXO1 and pXO2.</title>
        <authorList>
            <person name="Okinaka R.T."/>
            <person name="Cloud K."/>
            <person name="Hampton O."/>
            <person name="Hoffmaster A."/>
            <person name="Hill K.K."/>
            <person name="Keim P."/>
            <person name="Koehler T."/>
            <person name="Lamke G."/>
            <person name="Kumano S."/>
            <person name="Manter D."/>
            <person name="Martinez Y."/>
            <person name="Ricke D."/>
            <person name="Svensson R."/>
            <person name="Jackson P.J."/>
        </authorList>
    </citation>
    <scope>NUCLEOTIDE SEQUENCE [GENOMIC DNA]</scope>
    <source>
        <strain>Pasteur</strain>
    </source>
</reference>
<reference key="2">
    <citation type="journal article" date="2002" name="Science">
        <title>Comparative genome sequencing for discovery of novel polymorphisms in Bacillus anthracis.</title>
        <authorList>
            <person name="Read T.D."/>
            <person name="Salzberg S.L."/>
            <person name="Pop M."/>
            <person name="Shumway M.F."/>
            <person name="Umayam L."/>
            <person name="Jiang L."/>
            <person name="Holtzapple E."/>
            <person name="Busch J.D."/>
            <person name="Smith K.L."/>
            <person name="Schupp J.M."/>
            <person name="Solomon D."/>
            <person name="Keim P."/>
            <person name="Fraser C.M."/>
        </authorList>
    </citation>
    <scope>NUCLEOTIDE SEQUENCE [GENOMIC DNA]</scope>
    <source>
        <strain>Ames / isolate Florida / A2012</strain>
    </source>
</reference>
<reference key="3">
    <citation type="journal article" date="2009" name="J. Bacteriol.">
        <title>The complete genome sequence of Bacillus anthracis Ames 'Ancestor'.</title>
        <authorList>
            <person name="Ravel J."/>
            <person name="Jiang L."/>
            <person name="Stanley S.T."/>
            <person name="Wilson M.R."/>
            <person name="Decker R.S."/>
            <person name="Read T.D."/>
            <person name="Worsham P."/>
            <person name="Keim P.S."/>
            <person name="Salzberg S.L."/>
            <person name="Fraser-Liggett C.M."/>
            <person name="Rasko D.A."/>
        </authorList>
    </citation>
    <scope>NUCLEOTIDE SEQUENCE [LARGE SCALE GENOMIC DNA]</scope>
    <source>
        <strain>Ames ancestor</strain>
    </source>
</reference>
<geneLocation type="plasmid">
    <name>pXO2</name>
</geneLocation>
<protein>
    <recommendedName>
        <fullName>Uncharacterized protein pXO2-04/BXB0002/GBAA_pXO2_0002</fullName>
    </recommendedName>
</protein>
<organism>
    <name type="scientific">Bacillus anthracis</name>
    <dbReference type="NCBI Taxonomy" id="1392"/>
    <lineage>
        <taxon>Bacteria</taxon>
        <taxon>Bacillati</taxon>
        <taxon>Bacillota</taxon>
        <taxon>Bacilli</taxon>
        <taxon>Bacillales</taxon>
        <taxon>Bacillaceae</taxon>
        <taxon>Bacillus</taxon>
        <taxon>Bacillus cereus group</taxon>
    </lineage>
</organism>